<sequence>MLVPLILTLLAGAATFIGAFLGVLGQKPSNRVLAFSLGFAAGIMLLISLMEMLPAALDTEGMSPVLGYGMFIIGLLGYFGLDRLLPHAHPQDLMQKRQQPLPGSIKRTAILLTLGISLHNFPEGIATFVTASSNLELGFGIALAVALHNIPEGLAVAGPVYAATGSKRTAIFWAGISGMAEILGGVLAWLILGSLVSPIVMAAIMAAVAGIMVALSVDELMPLAKEIDPNNNPSYGVLCGMSIMGLSLVILQTIGIG</sequence>
<organism>
    <name type="scientific">Salmonella heidelberg (strain SL476)</name>
    <dbReference type="NCBI Taxonomy" id="454169"/>
    <lineage>
        <taxon>Bacteria</taxon>
        <taxon>Pseudomonadati</taxon>
        <taxon>Pseudomonadota</taxon>
        <taxon>Gammaproteobacteria</taxon>
        <taxon>Enterobacterales</taxon>
        <taxon>Enterobacteriaceae</taxon>
        <taxon>Salmonella</taxon>
    </lineage>
</organism>
<comment type="function">
    <text evidence="1">Mediates zinc uptake. May also transport other divalent cations.</text>
</comment>
<comment type="catalytic activity">
    <reaction evidence="1">
        <text>Zn(2+)(in) = Zn(2+)(out)</text>
        <dbReference type="Rhea" id="RHEA:29351"/>
        <dbReference type="ChEBI" id="CHEBI:29105"/>
    </reaction>
</comment>
<comment type="subcellular location">
    <subcellularLocation>
        <location evidence="1">Cell inner membrane</location>
        <topology evidence="1">Multi-pass membrane protein</topology>
    </subcellularLocation>
</comment>
<comment type="similarity">
    <text evidence="1">Belongs to the ZIP transporter (TC 2.A.5) family. ZupT subfamily.</text>
</comment>
<feature type="chain" id="PRO_1000128964" description="Zinc transporter ZupT">
    <location>
        <begin position="1"/>
        <end position="257"/>
    </location>
</feature>
<feature type="transmembrane region" description="Helical" evidence="1">
    <location>
        <begin position="5"/>
        <end position="25"/>
    </location>
</feature>
<feature type="transmembrane region" description="Helical" evidence="1">
    <location>
        <begin position="32"/>
        <end position="52"/>
    </location>
</feature>
<feature type="transmembrane region" description="Helical" evidence="1">
    <location>
        <begin position="61"/>
        <end position="81"/>
    </location>
</feature>
<feature type="transmembrane region" description="Helical" evidence="1">
    <location>
        <begin position="109"/>
        <end position="129"/>
    </location>
</feature>
<feature type="transmembrane region" description="Helical" evidence="1">
    <location>
        <begin position="137"/>
        <end position="157"/>
    </location>
</feature>
<feature type="transmembrane region" description="Helical" evidence="1">
    <location>
        <begin position="171"/>
        <end position="191"/>
    </location>
</feature>
<feature type="transmembrane region" description="Helical" evidence="1">
    <location>
        <begin position="195"/>
        <end position="215"/>
    </location>
</feature>
<feature type="transmembrane region" description="Helical" evidence="1">
    <location>
        <begin position="236"/>
        <end position="256"/>
    </location>
</feature>
<feature type="binding site" description="M2 metal binding site" evidence="1">
    <location>
        <position position="120"/>
    </location>
    <ligand>
        <name>Fe(2+)</name>
        <dbReference type="ChEBI" id="CHEBI:29033"/>
    </ligand>
</feature>
<feature type="binding site" description="M2 metal binding site" evidence="1">
    <location>
        <position position="123"/>
    </location>
    <ligand>
        <name>Fe(2+)</name>
        <dbReference type="ChEBI" id="CHEBI:29033"/>
    </ligand>
</feature>
<feature type="binding site" description="M1 metal binding site" evidence="1">
    <location>
        <position position="123"/>
    </location>
    <ligand>
        <name>Zn(2+)</name>
        <dbReference type="ChEBI" id="CHEBI:29105"/>
    </ligand>
</feature>
<feature type="binding site" description="M1 metal binding site" evidence="1">
    <location>
        <position position="148"/>
    </location>
    <ligand>
        <name>Zn(2+)</name>
        <dbReference type="ChEBI" id="CHEBI:29105"/>
    </ligand>
</feature>
<feature type="binding site" description="M2 metal binding site" evidence="1">
    <location>
        <position position="149"/>
    </location>
    <ligand>
        <name>Fe(2+)</name>
        <dbReference type="ChEBI" id="CHEBI:29033"/>
    </ligand>
</feature>
<feature type="binding site" description="M2 metal binding site" evidence="1">
    <location>
        <position position="152"/>
    </location>
    <ligand>
        <name>Fe(2+)</name>
        <dbReference type="ChEBI" id="CHEBI:29033"/>
    </ligand>
</feature>
<feature type="binding site" description="M1 metal binding site" evidence="1">
    <location>
        <position position="152"/>
    </location>
    <ligand>
        <name>Zn(2+)</name>
        <dbReference type="ChEBI" id="CHEBI:29105"/>
    </ligand>
</feature>
<feature type="binding site" description="M2 metal binding site" evidence="1">
    <location>
        <position position="181"/>
    </location>
    <ligand>
        <name>Fe(2+)</name>
        <dbReference type="ChEBI" id="CHEBI:29033"/>
    </ligand>
</feature>
<gene>
    <name evidence="1" type="primary">zupT</name>
    <name type="ordered locus">SeHA_C3441</name>
</gene>
<keyword id="KW-0997">Cell inner membrane</keyword>
<keyword id="KW-1003">Cell membrane</keyword>
<keyword id="KW-0406">Ion transport</keyword>
<keyword id="KW-0408">Iron</keyword>
<keyword id="KW-0472">Membrane</keyword>
<keyword id="KW-0479">Metal-binding</keyword>
<keyword id="KW-0812">Transmembrane</keyword>
<keyword id="KW-1133">Transmembrane helix</keyword>
<keyword id="KW-0813">Transport</keyword>
<keyword id="KW-0862">Zinc</keyword>
<keyword id="KW-0864">Zinc transport</keyword>
<name>ZUPT_SALHS</name>
<proteinExistence type="inferred from homology"/>
<accession>B4TI40</accession>
<reference key="1">
    <citation type="journal article" date="2011" name="J. Bacteriol.">
        <title>Comparative genomics of 28 Salmonella enterica isolates: evidence for CRISPR-mediated adaptive sublineage evolution.</title>
        <authorList>
            <person name="Fricke W.F."/>
            <person name="Mammel M.K."/>
            <person name="McDermott P.F."/>
            <person name="Tartera C."/>
            <person name="White D.G."/>
            <person name="Leclerc J.E."/>
            <person name="Ravel J."/>
            <person name="Cebula T.A."/>
        </authorList>
    </citation>
    <scope>NUCLEOTIDE SEQUENCE [LARGE SCALE GENOMIC DNA]</scope>
    <source>
        <strain>SL476</strain>
    </source>
</reference>
<evidence type="ECO:0000255" key="1">
    <source>
        <dbReference type="HAMAP-Rule" id="MF_00548"/>
    </source>
</evidence>
<dbReference type="EMBL" id="CP001120">
    <property type="protein sequence ID" value="ACF66417.1"/>
    <property type="molecule type" value="Genomic_DNA"/>
</dbReference>
<dbReference type="RefSeq" id="WP_000960953.1">
    <property type="nucleotide sequence ID" value="NC_011083.1"/>
</dbReference>
<dbReference type="SMR" id="B4TI40"/>
<dbReference type="KEGG" id="seh:SeHA_C3441"/>
<dbReference type="HOGENOM" id="CLU_015114_1_3_6"/>
<dbReference type="Proteomes" id="UP000001866">
    <property type="component" value="Chromosome"/>
</dbReference>
<dbReference type="GO" id="GO:0005886">
    <property type="term" value="C:plasma membrane"/>
    <property type="evidence" value="ECO:0007669"/>
    <property type="project" value="UniProtKB-SubCell"/>
</dbReference>
<dbReference type="GO" id="GO:0046872">
    <property type="term" value="F:metal ion binding"/>
    <property type="evidence" value="ECO:0007669"/>
    <property type="project" value="UniProtKB-KW"/>
</dbReference>
<dbReference type="GO" id="GO:0005385">
    <property type="term" value="F:zinc ion transmembrane transporter activity"/>
    <property type="evidence" value="ECO:0007669"/>
    <property type="project" value="UniProtKB-UniRule"/>
</dbReference>
<dbReference type="HAMAP" id="MF_00548">
    <property type="entry name" value="ZupT"/>
    <property type="match status" value="1"/>
</dbReference>
<dbReference type="InterPro" id="IPR003689">
    <property type="entry name" value="ZIP"/>
</dbReference>
<dbReference type="InterPro" id="IPR023498">
    <property type="entry name" value="Zn_transptr_ZupT"/>
</dbReference>
<dbReference type="NCBIfam" id="NF003243">
    <property type="entry name" value="PRK04201.1"/>
    <property type="match status" value="1"/>
</dbReference>
<dbReference type="PANTHER" id="PTHR11040:SF205">
    <property type="entry name" value="ZINC TRANSPORTER ZUPT"/>
    <property type="match status" value="1"/>
</dbReference>
<dbReference type="PANTHER" id="PTHR11040">
    <property type="entry name" value="ZINC/IRON TRANSPORTER"/>
    <property type="match status" value="1"/>
</dbReference>
<dbReference type="Pfam" id="PF02535">
    <property type="entry name" value="Zip"/>
    <property type="match status" value="2"/>
</dbReference>
<protein>
    <recommendedName>
        <fullName evidence="1">Zinc transporter ZupT</fullName>
    </recommendedName>
</protein>